<proteinExistence type="inferred from homology"/>
<keyword id="KW-0963">Cytoplasm</keyword>
<keyword id="KW-1185">Reference proteome</keyword>
<keyword id="KW-0690">Ribosome biogenesis</keyword>
<keyword id="KW-0698">rRNA processing</keyword>
<keyword id="KW-0949">S-adenosyl-L-methionine</keyword>
<keyword id="KW-0808">Transferase</keyword>
<organism>
    <name type="scientific">Methanosphaera stadtmanae (strain ATCC 43021 / DSM 3091 / JCM 11832 / MCB-3)</name>
    <dbReference type="NCBI Taxonomy" id="339860"/>
    <lineage>
        <taxon>Archaea</taxon>
        <taxon>Methanobacteriati</taxon>
        <taxon>Methanobacteriota</taxon>
        <taxon>Methanomada group</taxon>
        <taxon>Methanobacteria</taxon>
        <taxon>Methanobacteriales</taxon>
        <taxon>Methanobacteriaceae</taxon>
        <taxon>Methanosphaera</taxon>
    </lineage>
</organism>
<comment type="function">
    <text evidence="2">Aminocarboxypropyltransferase that catalyzes the aminocarboxypropyl transfer on pseudouridine corresponding to position 914 in M.jannaschii 16S rRNA. It constitutes the last step in biosynthesis of the hypermodified N1-methyl-N3-(3-amino-3-carboxypropyl) pseudouridine (m1acp3-Psi).</text>
</comment>
<comment type="catalytic activity">
    <reaction evidence="2">
        <text>an N(1)-methylpseudouridine in rRNA + S-adenosyl-L-methionine = N(1)-methyl-N(3)-[(3S)-3-amino-3-carboxypropyl]pseudouridine in rRNA + S-methyl-5'-thioadenosine + H(+)</text>
        <dbReference type="Rhea" id="RHEA:63296"/>
        <dbReference type="Rhea" id="RHEA-COMP:11634"/>
        <dbReference type="Rhea" id="RHEA-COMP:16310"/>
        <dbReference type="ChEBI" id="CHEBI:15378"/>
        <dbReference type="ChEBI" id="CHEBI:17509"/>
        <dbReference type="ChEBI" id="CHEBI:59789"/>
        <dbReference type="ChEBI" id="CHEBI:74890"/>
        <dbReference type="ChEBI" id="CHEBI:146234"/>
        <dbReference type="EC" id="2.5.1.157"/>
    </reaction>
</comment>
<comment type="subcellular location">
    <subcellularLocation>
        <location evidence="2">Cytoplasm</location>
    </subcellularLocation>
</comment>
<comment type="similarity">
    <text evidence="2">Belongs to the TDD superfamily. TSR3 family.</text>
</comment>
<name>TSR3_METST</name>
<accession>Q2NET3</accession>
<reference key="1">
    <citation type="journal article" date="2006" name="J. Bacteriol.">
        <title>The genome sequence of Methanosphaera stadtmanae reveals why this human intestinal archaeon is restricted to methanol and H2 for methane formation and ATP synthesis.</title>
        <authorList>
            <person name="Fricke W.F."/>
            <person name="Seedorf H."/>
            <person name="Henne A."/>
            <person name="Kruer M."/>
            <person name="Liesegang H."/>
            <person name="Hedderich R."/>
            <person name="Gottschalk G."/>
            <person name="Thauer R.K."/>
        </authorList>
    </citation>
    <scope>NUCLEOTIDE SEQUENCE [LARGE SCALE GENOMIC DNA]</scope>
    <source>
        <strain>ATCC 43021 / DSM 3091 / JCM 11832 / MCB-3</strain>
    </source>
</reference>
<gene>
    <name type="ordered locus">Msp_1293</name>
</gene>
<dbReference type="EC" id="2.5.1.157" evidence="2"/>
<dbReference type="EMBL" id="CP000102">
    <property type="protein sequence ID" value="ABC57670.1"/>
    <property type="molecule type" value="Genomic_DNA"/>
</dbReference>
<dbReference type="SMR" id="Q2NET3"/>
<dbReference type="STRING" id="339860.Msp_1293"/>
<dbReference type="KEGG" id="mst:Msp_1293"/>
<dbReference type="eggNOG" id="arCOG04733">
    <property type="taxonomic scope" value="Archaea"/>
</dbReference>
<dbReference type="HOGENOM" id="CLU_035060_4_2_2"/>
<dbReference type="Proteomes" id="UP000001931">
    <property type="component" value="Chromosome"/>
</dbReference>
<dbReference type="GO" id="GO:0005737">
    <property type="term" value="C:cytoplasm"/>
    <property type="evidence" value="ECO:0007669"/>
    <property type="project" value="UniProtKB-SubCell"/>
</dbReference>
<dbReference type="GO" id="GO:0106388">
    <property type="term" value="F:18S rRNA aminocarboxypropyltransferase activity"/>
    <property type="evidence" value="ECO:0007669"/>
    <property type="project" value="InterPro"/>
</dbReference>
<dbReference type="GO" id="GO:1904047">
    <property type="term" value="F:S-adenosyl-L-methionine binding"/>
    <property type="evidence" value="ECO:0007669"/>
    <property type="project" value="UniProtKB-UniRule"/>
</dbReference>
<dbReference type="GO" id="GO:0000455">
    <property type="term" value="P:enzyme-directed rRNA pseudouridine synthesis"/>
    <property type="evidence" value="ECO:0007669"/>
    <property type="project" value="UniProtKB-UniRule"/>
</dbReference>
<dbReference type="HAMAP" id="MF_01116">
    <property type="entry name" value="TSR3"/>
    <property type="match status" value="1"/>
</dbReference>
<dbReference type="InterPro" id="IPR007209">
    <property type="entry name" value="RNaseL-inhib-like_metal-bd_dom"/>
</dbReference>
<dbReference type="InterPro" id="IPR022968">
    <property type="entry name" value="Tsr3-like"/>
</dbReference>
<dbReference type="InterPro" id="IPR007177">
    <property type="entry name" value="Tsr3_C"/>
</dbReference>
<dbReference type="NCBIfam" id="NF002621">
    <property type="entry name" value="PRK02287.1"/>
    <property type="match status" value="1"/>
</dbReference>
<dbReference type="PANTHER" id="PTHR20426:SF0">
    <property type="entry name" value="18S RRNA AMINOCARBOXYPROPYLTRANSFERASE"/>
    <property type="match status" value="1"/>
</dbReference>
<dbReference type="PANTHER" id="PTHR20426">
    <property type="entry name" value="RIBOSOME BIOGENESIS PROTEIN TSR3 HOMOLOG"/>
    <property type="match status" value="1"/>
</dbReference>
<dbReference type="Pfam" id="PF04068">
    <property type="entry name" value="Fer4_RLI"/>
    <property type="match status" value="1"/>
</dbReference>
<dbReference type="Pfam" id="PF04034">
    <property type="entry name" value="Ribo_biogen_C"/>
    <property type="match status" value="1"/>
</dbReference>
<evidence type="ECO:0000250" key="1">
    <source>
        <dbReference type="UniProtKB" id="E1QU22"/>
    </source>
</evidence>
<evidence type="ECO:0000255" key="2">
    <source>
        <dbReference type="HAMAP-Rule" id="MF_01116"/>
    </source>
</evidence>
<evidence type="ECO:0000305" key="3"/>
<protein>
    <recommendedName>
        <fullName evidence="2 3">16S rRNA aminocarboxypropyltransferase</fullName>
        <ecNumber evidence="2">2.5.1.157</ecNumber>
    </recommendedName>
</protein>
<feature type="chain" id="PRO_1000065242" description="16S rRNA aminocarboxypropyltransferase">
    <location>
        <begin position="1"/>
        <end position="171"/>
    </location>
</feature>
<feature type="binding site" evidence="1 2">
    <location>
        <position position="18"/>
    </location>
    <ligand>
        <name>S-adenosyl-L-methionine</name>
        <dbReference type="ChEBI" id="CHEBI:59789"/>
    </ligand>
</feature>
<feature type="binding site" evidence="2">
    <location>
        <position position="68"/>
    </location>
    <ligand>
        <name>S-adenosyl-L-methionine</name>
        <dbReference type="ChEBI" id="CHEBI:59789"/>
    </ligand>
</feature>
<feature type="binding site" evidence="1 2">
    <location>
        <position position="91"/>
    </location>
    <ligand>
        <name>S-adenosyl-L-methionine</name>
        <dbReference type="ChEBI" id="CHEBI:59789"/>
    </ligand>
</feature>
<feature type="binding site" evidence="2">
    <location>
        <position position="110"/>
    </location>
    <ligand>
        <name>S-adenosyl-L-methionine</name>
        <dbReference type="ChEBI" id="CHEBI:59789"/>
    </ligand>
</feature>
<sequence length="171" mass="19416">MMKIVIYHSNECDPKRCTSIKLQKQNKVAITHNMRKIPYNAIVLDAEADKAVSREDREKITKYGLSALDCSWKKLKKSSFNFKSKKNHRLLPFLVAANPVNYGKPCILSSAEALSAALYIVGYKDEARDLMNSFKWGPHFITLNENLLEAYSEAKNSTEIVEVQNEFLGGK</sequence>